<comment type="function">
    <text evidence="1">This protein binds specifically to 23S rRNA; its binding is stimulated by other ribosomal proteins, e.g. L4, L17, and L20. It is important during the early stages of 50S assembly. It makes multiple contacts with different domains of the 23S rRNA in the assembled 50S subunit and ribosome (By similarity).</text>
</comment>
<comment type="function">
    <text evidence="1">The globular domain of the protein is located near the polypeptide exit tunnel on the outside of the subunit, while an extended beta-hairpin is found that lines the wall of the exit tunnel in the center of the 70S ribosome.</text>
</comment>
<comment type="subunit">
    <text evidence="1">Part of the 50S ribosomal subunit.</text>
</comment>
<comment type="similarity">
    <text evidence="1">Belongs to the universal ribosomal protein uL22 family.</text>
</comment>
<proteinExistence type="inferred from homology"/>
<sequence length="114" mass="12366">MEAIAKHRYARTSAQKARLVADQVRGLSVDKALNILTFSPKKAAALVKKVLESAIANAEHNEGADIDALRVATIMVDEGPSMKRIRPRAKGRADRILKRTAHITVVVSDAKAGR</sequence>
<name>RL22_AERHH</name>
<protein>
    <recommendedName>
        <fullName evidence="1">Large ribosomal subunit protein uL22</fullName>
    </recommendedName>
    <alternativeName>
        <fullName evidence="2">50S ribosomal protein L22</fullName>
    </alternativeName>
</protein>
<evidence type="ECO:0000255" key="1">
    <source>
        <dbReference type="HAMAP-Rule" id="MF_01331"/>
    </source>
</evidence>
<evidence type="ECO:0000305" key="2"/>
<accession>A0KF26</accession>
<keyword id="KW-1185">Reference proteome</keyword>
<keyword id="KW-0687">Ribonucleoprotein</keyword>
<keyword id="KW-0689">Ribosomal protein</keyword>
<keyword id="KW-0694">RNA-binding</keyword>
<keyword id="KW-0699">rRNA-binding</keyword>
<feature type="chain" id="PRO_1000052533" description="Large ribosomal subunit protein uL22">
    <location>
        <begin position="1"/>
        <end position="114"/>
    </location>
</feature>
<gene>
    <name evidence="1" type="primary">rplV</name>
    <name type="ordered locus">AHA_0314</name>
</gene>
<reference key="1">
    <citation type="journal article" date="2006" name="J. Bacteriol.">
        <title>Genome sequence of Aeromonas hydrophila ATCC 7966T: jack of all trades.</title>
        <authorList>
            <person name="Seshadri R."/>
            <person name="Joseph S.W."/>
            <person name="Chopra A.K."/>
            <person name="Sha J."/>
            <person name="Shaw J."/>
            <person name="Graf J."/>
            <person name="Haft D.H."/>
            <person name="Wu M."/>
            <person name="Ren Q."/>
            <person name="Rosovitz M.J."/>
            <person name="Madupu R."/>
            <person name="Tallon L."/>
            <person name="Kim M."/>
            <person name="Jin S."/>
            <person name="Vuong H."/>
            <person name="Stine O.C."/>
            <person name="Ali A."/>
            <person name="Horneman A.J."/>
            <person name="Heidelberg J.F."/>
        </authorList>
    </citation>
    <scope>NUCLEOTIDE SEQUENCE [LARGE SCALE GENOMIC DNA]</scope>
    <source>
        <strain>ATCC 7966 / DSM 30187 / BCRC 13018 / CCUG 14551 / JCM 1027 / KCTC 2358 / NCIMB 9240 / NCTC 8049</strain>
    </source>
</reference>
<organism>
    <name type="scientific">Aeromonas hydrophila subsp. hydrophila (strain ATCC 7966 / DSM 30187 / BCRC 13018 / CCUG 14551 / JCM 1027 / KCTC 2358 / NCIMB 9240 / NCTC 8049)</name>
    <dbReference type="NCBI Taxonomy" id="380703"/>
    <lineage>
        <taxon>Bacteria</taxon>
        <taxon>Pseudomonadati</taxon>
        <taxon>Pseudomonadota</taxon>
        <taxon>Gammaproteobacteria</taxon>
        <taxon>Aeromonadales</taxon>
        <taxon>Aeromonadaceae</taxon>
        <taxon>Aeromonas</taxon>
    </lineage>
</organism>
<dbReference type="EMBL" id="CP000462">
    <property type="protein sequence ID" value="ABK38894.1"/>
    <property type="molecule type" value="Genomic_DNA"/>
</dbReference>
<dbReference type="RefSeq" id="WP_011704314.1">
    <property type="nucleotide sequence ID" value="NC_008570.1"/>
</dbReference>
<dbReference type="RefSeq" id="YP_854845.1">
    <property type="nucleotide sequence ID" value="NC_008570.1"/>
</dbReference>
<dbReference type="SMR" id="A0KF26"/>
<dbReference type="STRING" id="380703.AHA_0314"/>
<dbReference type="EnsemblBacteria" id="ABK38894">
    <property type="protein sequence ID" value="ABK38894"/>
    <property type="gene ID" value="AHA_0314"/>
</dbReference>
<dbReference type="GeneID" id="4488773"/>
<dbReference type="KEGG" id="aha:AHA_0314"/>
<dbReference type="PATRIC" id="fig|380703.7.peg.303"/>
<dbReference type="eggNOG" id="COG0091">
    <property type="taxonomic scope" value="Bacteria"/>
</dbReference>
<dbReference type="HOGENOM" id="CLU_083987_3_3_6"/>
<dbReference type="OrthoDB" id="9805969at2"/>
<dbReference type="Proteomes" id="UP000000756">
    <property type="component" value="Chromosome"/>
</dbReference>
<dbReference type="GO" id="GO:0022625">
    <property type="term" value="C:cytosolic large ribosomal subunit"/>
    <property type="evidence" value="ECO:0007669"/>
    <property type="project" value="TreeGrafter"/>
</dbReference>
<dbReference type="GO" id="GO:0019843">
    <property type="term" value="F:rRNA binding"/>
    <property type="evidence" value="ECO:0007669"/>
    <property type="project" value="UniProtKB-UniRule"/>
</dbReference>
<dbReference type="GO" id="GO:0003735">
    <property type="term" value="F:structural constituent of ribosome"/>
    <property type="evidence" value="ECO:0007669"/>
    <property type="project" value="InterPro"/>
</dbReference>
<dbReference type="GO" id="GO:0006412">
    <property type="term" value="P:translation"/>
    <property type="evidence" value="ECO:0007669"/>
    <property type="project" value="UniProtKB-UniRule"/>
</dbReference>
<dbReference type="CDD" id="cd00336">
    <property type="entry name" value="Ribosomal_L22"/>
    <property type="match status" value="1"/>
</dbReference>
<dbReference type="FunFam" id="3.90.470.10:FF:000001">
    <property type="entry name" value="50S ribosomal protein L22"/>
    <property type="match status" value="1"/>
</dbReference>
<dbReference type="Gene3D" id="3.90.470.10">
    <property type="entry name" value="Ribosomal protein L22/L17"/>
    <property type="match status" value="1"/>
</dbReference>
<dbReference type="HAMAP" id="MF_01331_B">
    <property type="entry name" value="Ribosomal_uL22_B"/>
    <property type="match status" value="1"/>
</dbReference>
<dbReference type="InterPro" id="IPR001063">
    <property type="entry name" value="Ribosomal_uL22"/>
</dbReference>
<dbReference type="InterPro" id="IPR005727">
    <property type="entry name" value="Ribosomal_uL22_bac/chlpt-type"/>
</dbReference>
<dbReference type="InterPro" id="IPR047867">
    <property type="entry name" value="Ribosomal_uL22_bac/org-type"/>
</dbReference>
<dbReference type="InterPro" id="IPR018260">
    <property type="entry name" value="Ribosomal_uL22_CS"/>
</dbReference>
<dbReference type="InterPro" id="IPR036394">
    <property type="entry name" value="Ribosomal_uL22_sf"/>
</dbReference>
<dbReference type="NCBIfam" id="TIGR01044">
    <property type="entry name" value="rplV_bact"/>
    <property type="match status" value="1"/>
</dbReference>
<dbReference type="PANTHER" id="PTHR13501">
    <property type="entry name" value="CHLOROPLAST 50S RIBOSOMAL PROTEIN L22-RELATED"/>
    <property type="match status" value="1"/>
</dbReference>
<dbReference type="PANTHER" id="PTHR13501:SF8">
    <property type="entry name" value="LARGE RIBOSOMAL SUBUNIT PROTEIN UL22M"/>
    <property type="match status" value="1"/>
</dbReference>
<dbReference type="Pfam" id="PF00237">
    <property type="entry name" value="Ribosomal_L22"/>
    <property type="match status" value="1"/>
</dbReference>
<dbReference type="SUPFAM" id="SSF54843">
    <property type="entry name" value="Ribosomal protein L22"/>
    <property type="match status" value="1"/>
</dbReference>
<dbReference type="PROSITE" id="PS00464">
    <property type="entry name" value="RIBOSOMAL_L22"/>
    <property type="match status" value="1"/>
</dbReference>